<name>RIBB_PELPD</name>
<gene>
    <name evidence="1" type="primary">ribB</name>
    <name type="ordered locus">Ppro_0312</name>
</gene>
<accession>A1AKS6</accession>
<evidence type="ECO:0000255" key="1">
    <source>
        <dbReference type="HAMAP-Rule" id="MF_00180"/>
    </source>
</evidence>
<keyword id="KW-0456">Lyase</keyword>
<keyword id="KW-0460">Magnesium</keyword>
<keyword id="KW-0464">Manganese</keyword>
<keyword id="KW-0479">Metal-binding</keyword>
<keyword id="KW-1185">Reference proteome</keyword>
<keyword id="KW-0686">Riboflavin biosynthesis</keyword>
<proteinExistence type="inferred from homology"/>
<sequence>MNQSYFPHHQSDLSLQRVEAALDALRAGQGVLVTDDEQRENEGDLIFAAQSLTREQVAMLIRECSGIVCLCLTDEAVRRLDLPLMVSDNSSRYQTAFTVSIEAAEGVTTGVSAADRLTTIRAAIADDAGPLCLSRPGHVFPLRARPGGVLERRGHTEATVDLMRLAGLKPCGVLCELTNPDGSMARMPEIVAFSRKHGFPLITVEELVQYRIVREQPAALLQAEAESAGALCSA</sequence>
<reference key="1">
    <citation type="submission" date="2006-10" db="EMBL/GenBank/DDBJ databases">
        <title>Complete sequence of chromosome of Pelobacter propionicus DSM 2379.</title>
        <authorList>
            <consortium name="US DOE Joint Genome Institute"/>
            <person name="Copeland A."/>
            <person name="Lucas S."/>
            <person name="Lapidus A."/>
            <person name="Barry K."/>
            <person name="Detter J.C."/>
            <person name="Glavina del Rio T."/>
            <person name="Hammon N."/>
            <person name="Israni S."/>
            <person name="Dalin E."/>
            <person name="Tice H."/>
            <person name="Pitluck S."/>
            <person name="Saunders E."/>
            <person name="Brettin T."/>
            <person name="Bruce D."/>
            <person name="Han C."/>
            <person name="Tapia R."/>
            <person name="Schmutz J."/>
            <person name="Larimer F."/>
            <person name="Land M."/>
            <person name="Hauser L."/>
            <person name="Kyrpides N."/>
            <person name="Kim E."/>
            <person name="Lovley D."/>
            <person name="Richardson P."/>
        </authorList>
    </citation>
    <scope>NUCLEOTIDE SEQUENCE [LARGE SCALE GENOMIC DNA]</scope>
    <source>
        <strain>DSM 2379 / NBRC 103807 / OttBd1</strain>
    </source>
</reference>
<organism>
    <name type="scientific">Pelobacter propionicus (strain DSM 2379 / NBRC 103807 / OttBd1)</name>
    <dbReference type="NCBI Taxonomy" id="338966"/>
    <lineage>
        <taxon>Bacteria</taxon>
        <taxon>Pseudomonadati</taxon>
        <taxon>Thermodesulfobacteriota</taxon>
        <taxon>Desulfuromonadia</taxon>
        <taxon>Desulfuromonadales</taxon>
        <taxon>Desulfuromonadaceae</taxon>
        <taxon>Pelobacter</taxon>
    </lineage>
</organism>
<feature type="chain" id="PRO_1000040618" description="3,4-dihydroxy-2-butanone 4-phosphate synthase">
    <location>
        <begin position="1"/>
        <end position="234"/>
    </location>
</feature>
<feature type="binding site" evidence="1">
    <location>
        <begin position="39"/>
        <end position="40"/>
    </location>
    <ligand>
        <name>D-ribulose 5-phosphate</name>
        <dbReference type="ChEBI" id="CHEBI:58121"/>
    </ligand>
</feature>
<feature type="binding site" evidence="1">
    <location>
        <position position="40"/>
    </location>
    <ligand>
        <name>Mg(2+)</name>
        <dbReference type="ChEBI" id="CHEBI:18420"/>
        <label>1</label>
    </ligand>
</feature>
<feature type="binding site" evidence="1">
    <location>
        <position position="40"/>
    </location>
    <ligand>
        <name>Mg(2+)</name>
        <dbReference type="ChEBI" id="CHEBI:18420"/>
        <label>2</label>
    </ligand>
</feature>
<feature type="binding site" evidence="1">
    <location>
        <position position="44"/>
    </location>
    <ligand>
        <name>D-ribulose 5-phosphate</name>
        <dbReference type="ChEBI" id="CHEBI:58121"/>
    </ligand>
</feature>
<feature type="binding site" evidence="1">
    <location>
        <begin position="152"/>
        <end position="156"/>
    </location>
    <ligand>
        <name>D-ribulose 5-phosphate</name>
        <dbReference type="ChEBI" id="CHEBI:58121"/>
    </ligand>
</feature>
<feature type="binding site" evidence="1">
    <location>
        <position position="155"/>
    </location>
    <ligand>
        <name>Mg(2+)</name>
        <dbReference type="ChEBI" id="CHEBI:18420"/>
        <label>2</label>
    </ligand>
</feature>
<feature type="binding site" evidence="1">
    <location>
        <position position="176"/>
    </location>
    <ligand>
        <name>D-ribulose 5-phosphate</name>
        <dbReference type="ChEBI" id="CHEBI:58121"/>
    </ligand>
</feature>
<feature type="site" description="Essential for catalytic activity" evidence="1">
    <location>
        <position position="138"/>
    </location>
</feature>
<feature type="site" description="Essential for catalytic activity" evidence="1">
    <location>
        <position position="176"/>
    </location>
</feature>
<dbReference type="EC" id="4.1.99.12" evidence="1"/>
<dbReference type="EMBL" id="CP000482">
    <property type="protein sequence ID" value="ABK97946.1"/>
    <property type="molecule type" value="Genomic_DNA"/>
</dbReference>
<dbReference type="RefSeq" id="WP_011734260.1">
    <property type="nucleotide sequence ID" value="NC_008609.1"/>
</dbReference>
<dbReference type="SMR" id="A1AKS6"/>
<dbReference type="STRING" id="338966.Ppro_0312"/>
<dbReference type="KEGG" id="ppd:Ppro_0312"/>
<dbReference type="eggNOG" id="COG0108">
    <property type="taxonomic scope" value="Bacteria"/>
</dbReference>
<dbReference type="HOGENOM" id="CLU_020273_3_0_7"/>
<dbReference type="OrthoDB" id="9793111at2"/>
<dbReference type="UniPathway" id="UPA00275">
    <property type="reaction ID" value="UER00399"/>
</dbReference>
<dbReference type="Proteomes" id="UP000006732">
    <property type="component" value="Chromosome"/>
</dbReference>
<dbReference type="GO" id="GO:0005829">
    <property type="term" value="C:cytosol"/>
    <property type="evidence" value="ECO:0007669"/>
    <property type="project" value="TreeGrafter"/>
</dbReference>
<dbReference type="GO" id="GO:0008686">
    <property type="term" value="F:3,4-dihydroxy-2-butanone-4-phosphate synthase activity"/>
    <property type="evidence" value="ECO:0007669"/>
    <property type="project" value="UniProtKB-UniRule"/>
</dbReference>
<dbReference type="GO" id="GO:0000287">
    <property type="term" value="F:magnesium ion binding"/>
    <property type="evidence" value="ECO:0007669"/>
    <property type="project" value="UniProtKB-UniRule"/>
</dbReference>
<dbReference type="GO" id="GO:0030145">
    <property type="term" value="F:manganese ion binding"/>
    <property type="evidence" value="ECO:0007669"/>
    <property type="project" value="UniProtKB-UniRule"/>
</dbReference>
<dbReference type="GO" id="GO:0009231">
    <property type="term" value="P:riboflavin biosynthetic process"/>
    <property type="evidence" value="ECO:0007669"/>
    <property type="project" value="UniProtKB-UniRule"/>
</dbReference>
<dbReference type="FunFam" id="3.90.870.10:FF:000002">
    <property type="entry name" value="3,4-dihydroxy-2-butanone 4-phosphate synthase"/>
    <property type="match status" value="1"/>
</dbReference>
<dbReference type="Gene3D" id="3.90.870.10">
    <property type="entry name" value="DHBP synthase"/>
    <property type="match status" value="1"/>
</dbReference>
<dbReference type="HAMAP" id="MF_00180">
    <property type="entry name" value="RibB"/>
    <property type="match status" value="1"/>
</dbReference>
<dbReference type="InterPro" id="IPR017945">
    <property type="entry name" value="DHBP_synth_RibB-like_a/b_dom"/>
</dbReference>
<dbReference type="InterPro" id="IPR000422">
    <property type="entry name" value="DHBP_synthase_RibB"/>
</dbReference>
<dbReference type="NCBIfam" id="TIGR00506">
    <property type="entry name" value="ribB"/>
    <property type="match status" value="1"/>
</dbReference>
<dbReference type="PANTHER" id="PTHR21327:SF38">
    <property type="entry name" value="3,4-DIHYDROXY-2-BUTANONE 4-PHOSPHATE SYNTHASE"/>
    <property type="match status" value="1"/>
</dbReference>
<dbReference type="PANTHER" id="PTHR21327">
    <property type="entry name" value="GTP CYCLOHYDROLASE II-RELATED"/>
    <property type="match status" value="1"/>
</dbReference>
<dbReference type="Pfam" id="PF00926">
    <property type="entry name" value="DHBP_synthase"/>
    <property type="match status" value="1"/>
</dbReference>
<dbReference type="SUPFAM" id="SSF55821">
    <property type="entry name" value="YrdC/RibB"/>
    <property type="match status" value="1"/>
</dbReference>
<protein>
    <recommendedName>
        <fullName evidence="1">3,4-dihydroxy-2-butanone 4-phosphate synthase</fullName>
        <shortName evidence="1">DHBP synthase</shortName>
        <ecNumber evidence="1">4.1.99.12</ecNumber>
    </recommendedName>
</protein>
<comment type="function">
    <text evidence="1">Catalyzes the conversion of D-ribulose 5-phosphate to formate and 3,4-dihydroxy-2-butanone 4-phosphate.</text>
</comment>
<comment type="catalytic activity">
    <reaction evidence="1">
        <text>D-ribulose 5-phosphate = (2S)-2-hydroxy-3-oxobutyl phosphate + formate + H(+)</text>
        <dbReference type="Rhea" id="RHEA:18457"/>
        <dbReference type="ChEBI" id="CHEBI:15378"/>
        <dbReference type="ChEBI" id="CHEBI:15740"/>
        <dbReference type="ChEBI" id="CHEBI:58121"/>
        <dbReference type="ChEBI" id="CHEBI:58830"/>
        <dbReference type="EC" id="4.1.99.12"/>
    </reaction>
</comment>
<comment type="cofactor">
    <cofactor evidence="1">
        <name>Mg(2+)</name>
        <dbReference type="ChEBI" id="CHEBI:18420"/>
    </cofactor>
    <cofactor evidence="1">
        <name>Mn(2+)</name>
        <dbReference type="ChEBI" id="CHEBI:29035"/>
    </cofactor>
    <text evidence="1">Binds 2 divalent metal cations per subunit. Magnesium or manganese.</text>
</comment>
<comment type="pathway">
    <text evidence="1">Cofactor biosynthesis; riboflavin biosynthesis; 2-hydroxy-3-oxobutyl phosphate from D-ribulose 5-phosphate: step 1/1.</text>
</comment>
<comment type="subunit">
    <text evidence="1">Homodimer.</text>
</comment>
<comment type="similarity">
    <text evidence="1">Belongs to the DHBP synthase family.</text>
</comment>